<sequence length="183" mass="19675">MTATAQQLEFLKNSIQSIPDYPKPGILFRDVTSLLEDPKAYALSIELLVERYRHAGITKVVGTEARGFLFGAPVALGLGVGFVPVRKPGKLPRKTFAEDYALEYGTDTLELHCDAIQPGDVVLVVDDLLATGGTIEATVNLIRRAGGSVKDAAFIINLFDLSGEARLKALGVESYSLVSFPGH</sequence>
<name>APT_ERWT9</name>
<reference key="1">
    <citation type="journal article" date="2008" name="Environ. Microbiol.">
        <title>The genome of Erwinia tasmaniensis strain Et1/99, a non-pathogenic bacterium in the genus Erwinia.</title>
        <authorList>
            <person name="Kube M."/>
            <person name="Migdoll A.M."/>
            <person name="Mueller I."/>
            <person name="Kuhl H."/>
            <person name="Beck A."/>
            <person name="Reinhardt R."/>
            <person name="Geider K."/>
        </authorList>
    </citation>
    <scope>NUCLEOTIDE SEQUENCE [LARGE SCALE GENOMIC DNA]</scope>
    <source>
        <strain>DSM 17950 / CFBP 7177 / CIP 109463 / NCPPB 4357 / Et1/99</strain>
    </source>
</reference>
<accession>B2VHU9</accession>
<gene>
    <name evidence="1" type="primary">apt</name>
    <name type="ordered locus">ETA_24750</name>
</gene>
<dbReference type="EC" id="2.4.2.7" evidence="1"/>
<dbReference type="EMBL" id="CU468135">
    <property type="protein sequence ID" value="CAO97521.1"/>
    <property type="molecule type" value="Genomic_DNA"/>
</dbReference>
<dbReference type="RefSeq" id="WP_012442187.1">
    <property type="nucleotide sequence ID" value="NC_010694.1"/>
</dbReference>
<dbReference type="SMR" id="B2VHU9"/>
<dbReference type="STRING" id="465817.ETA_24750"/>
<dbReference type="KEGG" id="eta:ETA_24750"/>
<dbReference type="eggNOG" id="COG0503">
    <property type="taxonomic scope" value="Bacteria"/>
</dbReference>
<dbReference type="HOGENOM" id="CLU_063339_3_0_6"/>
<dbReference type="OrthoDB" id="9803963at2"/>
<dbReference type="UniPathway" id="UPA00588">
    <property type="reaction ID" value="UER00646"/>
</dbReference>
<dbReference type="Proteomes" id="UP000001726">
    <property type="component" value="Chromosome"/>
</dbReference>
<dbReference type="GO" id="GO:0005737">
    <property type="term" value="C:cytoplasm"/>
    <property type="evidence" value="ECO:0007669"/>
    <property type="project" value="UniProtKB-SubCell"/>
</dbReference>
<dbReference type="GO" id="GO:0002055">
    <property type="term" value="F:adenine binding"/>
    <property type="evidence" value="ECO:0007669"/>
    <property type="project" value="TreeGrafter"/>
</dbReference>
<dbReference type="GO" id="GO:0003999">
    <property type="term" value="F:adenine phosphoribosyltransferase activity"/>
    <property type="evidence" value="ECO:0007669"/>
    <property type="project" value="UniProtKB-UniRule"/>
</dbReference>
<dbReference type="GO" id="GO:0016208">
    <property type="term" value="F:AMP binding"/>
    <property type="evidence" value="ECO:0007669"/>
    <property type="project" value="TreeGrafter"/>
</dbReference>
<dbReference type="GO" id="GO:0006168">
    <property type="term" value="P:adenine salvage"/>
    <property type="evidence" value="ECO:0007669"/>
    <property type="project" value="InterPro"/>
</dbReference>
<dbReference type="GO" id="GO:0044209">
    <property type="term" value="P:AMP salvage"/>
    <property type="evidence" value="ECO:0007669"/>
    <property type="project" value="UniProtKB-UniRule"/>
</dbReference>
<dbReference type="GO" id="GO:0006166">
    <property type="term" value="P:purine ribonucleoside salvage"/>
    <property type="evidence" value="ECO:0007669"/>
    <property type="project" value="UniProtKB-KW"/>
</dbReference>
<dbReference type="CDD" id="cd06223">
    <property type="entry name" value="PRTases_typeI"/>
    <property type="match status" value="1"/>
</dbReference>
<dbReference type="FunFam" id="3.40.50.2020:FF:000004">
    <property type="entry name" value="Adenine phosphoribosyltransferase"/>
    <property type="match status" value="1"/>
</dbReference>
<dbReference type="Gene3D" id="3.40.50.2020">
    <property type="match status" value="1"/>
</dbReference>
<dbReference type="HAMAP" id="MF_00004">
    <property type="entry name" value="Aden_phosphoribosyltr"/>
    <property type="match status" value="1"/>
</dbReference>
<dbReference type="InterPro" id="IPR005764">
    <property type="entry name" value="Ade_phspho_trans"/>
</dbReference>
<dbReference type="InterPro" id="IPR000836">
    <property type="entry name" value="PRibTrfase_dom"/>
</dbReference>
<dbReference type="InterPro" id="IPR029057">
    <property type="entry name" value="PRTase-like"/>
</dbReference>
<dbReference type="InterPro" id="IPR050054">
    <property type="entry name" value="UPRTase/APRTase"/>
</dbReference>
<dbReference type="NCBIfam" id="TIGR01090">
    <property type="entry name" value="apt"/>
    <property type="match status" value="1"/>
</dbReference>
<dbReference type="NCBIfam" id="NF002632">
    <property type="entry name" value="PRK02304.1-1"/>
    <property type="match status" value="1"/>
</dbReference>
<dbReference type="NCBIfam" id="NF002634">
    <property type="entry name" value="PRK02304.1-3"/>
    <property type="match status" value="1"/>
</dbReference>
<dbReference type="NCBIfam" id="NF002636">
    <property type="entry name" value="PRK02304.1-5"/>
    <property type="match status" value="1"/>
</dbReference>
<dbReference type="PANTHER" id="PTHR32315">
    <property type="entry name" value="ADENINE PHOSPHORIBOSYLTRANSFERASE"/>
    <property type="match status" value="1"/>
</dbReference>
<dbReference type="PANTHER" id="PTHR32315:SF3">
    <property type="entry name" value="ADENINE PHOSPHORIBOSYLTRANSFERASE"/>
    <property type="match status" value="1"/>
</dbReference>
<dbReference type="Pfam" id="PF00156">
    <property type="entry name" value="Pribosyltran"/>
    <property type="match status" value="1"/>
</dbReference>
<dbReference type="SUPFAM" id="SSF53271">
    <property type="entry name" value="PRTase-like"/>
    <property type="match status" value="1"/>
</dbReference>
<dbReference type="PROSITE" id="PS00103">
    <property type="entry name" value="PUR_PYR_PR_TRANSFER"/>
    <property type="match status" value="1"/>
</dbReference>
<evidence type="ECO:0000255" key="1">
    <source>
        <dbReference type="HAMAP-Rule" id="MF_00004"/>
    </source>
</evidence>
<feature type="chain" id="PRO_1000088971" description="Adenine phosphoribosyltransferase">
    <location>
        <begin position="1"/>
        <end position="183"/>
    </location>
</feature>
<organism>
    <name type="scientific">Erwinia tasmaniensis (strain DSM 17950 / CFBP 7177 / CIP 109463 / NCPPB 4357 / Et1/99)</name>
    <dbReference type="NCBI Taxonomy" id="465817"/>
    <lineage>
        <taxon>Bacteria</taxon>
        <taxon>Pseudomonadati</taxon>
        <taxon>Pseudomonadota</taxon>
        <taxon>Gammaproteobacteria</taxon>
        <taxon>Enterobacterales</taxon>
        <taxon>Erwiniaceae</taxon>
        <taxon>Erwinia</taxon>
    </lineage>
</organism>
<protein>
    <recommendedName>
        <fullName evidence="1">Adenine phosphoribosyltransferase</fullName>
        <shortName evidence="1">APRT</shortName>
        <ecNumber evidence="1">2.4.2.7</ecNumber>
    </recommendedName>
</protein>
<proteinExistence type="inferred from homology"/>
<comment type="function">
    <text evidence="1">Catalyzes a salvage reaction resulting in the formation of AMP, that is energically less costly than de novo synthesis.</text>
</comment>
<comment type="catalytic activity">
    <reaction evidence="1">
        <text>AMP + diphosphate = 5-phospho-alpha-D-ribose 1-diphosphate + adenine</text>
        <dbReference type="Rhea" id="RHEA:16609"/>
        <dbReference type="ChEBI" id="CHEBI:16708"/>
        <dbReference type="ChEBI" id="CHEBI:33019"/>
        <dbReference type="ChEBI" id="CHEBI:58017"/>
        <dbReference type="ChEBI" id="CHEBI:456215"/>
        <dbReference type="EC" id="2.4.2.7"/>
    </reaction>
</comment>
<comment type="pathway">
    <text evidence="1">Purine metabolism; AMP biosynthesis via salvage pathway; AMP from adenine: step 1/1.</text>
</comment>
<comment type="subunit">
    <text evidence="1">Homodimer.</text>
</comment>
<comment type="subcellular location">
    <subcellularLocation>
        <location evidence="1">Cytoplasm</location>
    </subcellularLocation>
</comment>
<comment type="similarity">
    <text evidence="1">Belongs to the purine/pyrimidine phosphoribosyltransferase family.</text>
</comment>
<keyword id="KW-0963">Cytoplasm</keyword>
<keyword id="KW-0328">Glycosyltransferase</keyword>
<keyword id="KW-0660">Purine salvage</keyword>
<keyword id="KW-1185">Reference proteome</keyword>
<keyword id="KW-0808">Transferase</keyword>